<name>DDL_MYCUA</name>
<gene>
    <name evidence="2" type="primary">ddl</name>
    <name type="ordered locus">MUL_1976</name>
</gene>
<protein>
    <recommendedName>
        <fullName evidence="2">D-alanine--D-alanine ligase</fullName>
        <ecNumber evidence="2">6.3.2.4</ecNumber>
    </recommendedName>
    <alternativeName>
        <fullName evidence="2">D-Ala-D-Ala ligase</fullName>
    </alternativeName>
    <alternativeName>
        <fullName evidence="2">D-alanylalanine synthetase</fullName>
    </alternativeName>
</protein>
<accession>A0PQ03</accession>
<sequence length="373" mass="39729">MSGSSRRGERLRVAVVFGGRSNEHAISCVSAGSILRNLDPRRFEVIAIGITPQGSWVLTDGNPDALAITDRRLPEVSSQSGTELALPADPRWGGQLVSLPPGAGEVLASVDVVFPVLHGPYGEDGTIQGLLELAGVPYVGAGVLASAAGMDKEFTKKLWSAAGLPIGPHAVLRPSRQSLDREELQRLGLPAYVKPARGGSSIGVSRVSSFDELPAAIAAARRHDPKVIVEAAINGRELECGVLEFPDGRLEASTLGEIRVAGVRGREDGFYDFETKYLDDAAELDVPAKVEDDVADAVRQLAIRAFEAIDCQGLARVDFFLTDDGPVINELNTMPGFTTISMYPRMWVASGVDYPTLLATMVETALSRGIGLR</sequence>
<organism>
    <name type="scientific">Mycobacterium ulcerans (strain Agy99)</name>
    <dbReference type="NCBI Taxonomy" id="362242"/>
    <lineage>
        <taxon>Bacteria</taxon>
        <taxon>Bacillati</taxon>
        <taxon>Actinomycetota</taxon>
        <taxon>Actinomycetes</taxon>
        <taxon>Mycobacteriales</taxon>
        <taxon>Mycobacteriaceae</taxon>
        <taxon>Mycobacterium</taxon>
        <taxon>Mycobacterium ulcerans group</taxon>
    </lineage>
</organism>
<proteinExistence type="inferred from homology"/>
<feature type="chain" id="PRO_1000030471" description="D-alanine--D-alanine ligase">
    <location>
        <begin position="1"/>
        <end position="373"/>
    </location>
</feature>
<feature type="domain" description="ATP-grasp" evidence="2">
    <location>
        <begin position="156"/>
        <end position="363"/>
    </location>
</feature>
<feature type="binding site" evidence="2">
    <location>
        <begin position="184"/>
        <end position="239"/>
    </location>
    <ligand>
        <name>ATP</name>
        <dbReference type="ChEBI" id="CHEBI:30616"/>
    </ligand>
</feature>
<feature type="binding site" evidence="2">
    <location>
        <position position="318"/>
    </location>
    <ligand>
        <name>Mg(2+)</name>
        <dbReference type="ChEBI" id="CHEBI:18420"/>
        <label>1</label>
    </ligand>
</feature>
<feature type="binding site" evidence="2">
    <location>
        <position position="330"/>
    </location>
    <ligand>
        <name>Mg(2+)</name>
        <dbReference type="ChEBI" id="CHEBI:18420"/>
        <label>1</label>
    </ligand>
</feature>
<feature type="binding site" evidence="2">
    <location>
        <position position="330"/>
    </location>
    <ligand>
        <name>Mg(2+)</name>
        <dbReference type="ChEBI" id="CHEBI:18420"/>
        <label>2</label>
    </ligand>
</feature>
<feature type="binding site" evidence="2">
    <location>
        <position position="332"/>
    </location>
    <ligand>
        <name>Mg(2+)</name>
        <dbReference type="ChEBI" id="CHEBI:18420"/>
        <label>2</label>
    </ligand>
</feature>
<comment type="function">
    <text evidence="2">Cell wall formation.</text>
</comment>
<comment type="catalytic activity">
    <reaction evidence="2">
        <text>2 D-alanine + ATP = D-alanyl-D-alanine + ADP + phosphate + H(+)</text>
        <dbReference type="Rhea" id="RHEA:11224"/>
        <dbReference type="ChEBI" id="CHEBI:15378"/>
        <dbReference type="ChEBI" id="CHEBI:30616"/>
        <dbReference type="ChEBI" id="CHEBI:43474"/>
        <dbReference type="ChEBI" id="CHEBI:57416"/>
        <dbReference type="ChEBI" id="CHEBI:57822"/>
        <dbReference type="ChEBI" id="CHEBI:456216"/>
        <dbReference type="EC" id="6.3.2.4"/>
    </reaction>
</comment>
<comment type="cofactor">
    <cofactor evidence="1">
        <name>Mg(2+)</name>
        <dbReference type="ChEBI" id="CHEBI:18420"/>
    </cofactor>
    <cofactor evidence="1">
        <name>Mn(2+)</name>
        <dbReference type="ChEBI" id="CHEBI:29035"/>
    </cofactor>
    <text evidence="1">Binds 2 magnesium or manganese ions per subunit.</text>
</comment>
<comment type="pathway">
    <text evidence="2">Cell wall biogenesis; peptidoglycan biosynthesis.</text>
</comment>
<comment type="subcellular location">
    <subcellularLocation>
        <location evidence="2">Cytoplasm</location>
    </subcellularLocation>
</comment>
<comment type="similarity">
    <text evidence="2">Belongs to the D-alanine--D-alanine ligase family.</text>
</comment>
<dbReference type="EC" id="6.3.2.4" evidence="2"/>
<dbReference type="EMBL" id="CP000325">
    <property type="protein sequence ID" value="ABL04422.1"/>
    <property type="molecule type" value="Genomic_DNA"/>
</dbReference>
<dbReference type="RefSeq" id="WP_011740041.1">
    <property type="nucleotide sequence ID" value="NC_008611.1"/>
</dbReference>
<dbReference type="SMR" id="A0PQ03"/>
<dbReference type="KEGG" id="mul:MUL_1976"/>
<dbReference type="eggNOG" id="COG1181">
    <property type="taxonomic scope" value="Bacteria"/>
</dbReference>
<dbReference type="HOGENOM" id="CLU_039268_0_1_11"/>
<dbReference type="UniPathway" id="UPA00219"/>
<dbReference type="Proteomes" id="UP000000765">
    <property type="component" value="Chromosome"/>
</dbReference>
<dbReference type="GO" id="GO:0005829">
    <property type="term" value="C:cytosol"/>
    <property type="evidence" value="ECO:0007669"/>
    <property type="project" value="TreeGrafter"/>
</dbReference>
<dbReference type="GO" id="GO:0005524">
    <property type="term" value="F:ATP binding"/>
    <property type="evidence" value="ECO:0007669"/>
    <property type="project" value="UniProtKB-KW"/>
</dbReference>
<dbReference type="GO" id="GO:0008716">
    <property type="term" value="F:D-alanine-D-alanine ligase activity"/>
    <property type="evidence" value="ECO:0007669"/>
    <property type="project" value="UniProtKB-UniRule"/>
</dbReference>
<dbReference type="GO" id="GO:0046872">
    <property type="term" value="F:metal ion binding"/>
    <property type="evidence" value="ECO:0007669"/>
    <property type="project" value="UniProtKB-KW"/>
</dbReference>
<dbReference type="GO" id="GO:0071555">
    <property type="term" value="P:cell wall organization"/>
    <property type="evidence" value="ECO:0007669"/>
    <property type="project" value="UniProtKB-KW"/>
</dbReference>
<dbReference type="GO" id="GO:0009252">
    <property type="term" value="P:peptidoglycan biosynthetic process"/>
    <property type="evidence" value="ECO:0007669"/>
    <property type="project" value="UniProtKB-UniRule"/>
</dbReference>
<dbReference type="GO" id="GO:0008360">
    <property type="term" value="P:regulation of cell shape"/>
    <property type="evidence" value="ECO:0007669"/>
    <property type="project" value="UniProtKB-KW"/>
</dbReference>
<dbReference type="FunFam" id="3.30.470.20:FF:000008">
    <property type="entry name" value="D-alanine--D-alanine ligase"/>
    <property type="match status" value="1"/>
</dbReference>
<dbReference type="Gene3D" id="3.40.50.20">
    <property type="match status" value="1"/>
</dbReference>
<dbReference type="Gene3D" id="3.30.1490.20">
    <property type="entry name" value="ATP-grasp fold, A domain"/>
    <property type="match status" value="1"/>
</dbReference>
<dbReference type="Gene3D" id="3.30.470.20">
    <property type="entry name" value="ATP-grasp fold, B domain"/>
    <property type="match status" value="1"/>
</dbReference>
<dbReference type="HAMAP" id="MF_00047">
    <property type="entry name" value="Dala_Dala_lig"/>
    <property type="match status" value="1"/>
</dbReference>
<dbReference type="InterPro" id="IPR011761">
    <property type="entry name" value="ATP-grasp"/>
</dbReference>
<dbReference type="InterPro" id="IPR013815">
    <property type="entry name" value="ATP_grasp_subdomain_1"/>
</dbReference>
<dbReference type="InterPro" id="IPR000291">
    <property type="entry name" value="D-Ala_lig_Van_CS"/>
</dbReference>
<dbReference type="InterPro" id="IPR005905">
    <property type="entry name" value="D_ala_D_ala"/>
</dbReference>
<dbReference type="InterPro" id="IPR011095">
    <property type="entry name" value="Dala_Dala_lig_C"/>
</dbReference>
<dbReference type="InterPro" id="IPR011127">
    <property type="entry name" value="Dala_Dala_lig_N"/>
</dbReference>
<dbReference type="InterPro" id="IPR016185">
    <property type="entry name" value="PreATP-grasp_dom_sf"/>
</dbReference>
<dbReference type="NCBIfam" id="TIGR01205">
    <property type="entry name" value="D_ala_D_alaTIGR"/>
    <property type="match status" value="1"/>
</dbReference>
<dbReference type="NCBIfam" id="NF002378">
    <property type="entry name" value="PRK01372.1"/>
    <property type="match status" value="1"/>
</dbReference>
<dbReference type="NCBIfam" id="NF002528">
    <property type="entry name" value="PRK01966.1-4"/>
    <property type="match status" value="1"/>
</dbReference>
<dbReference type="PANTHER" id="PTHR23132">
    <property type="entry name" value="D-ALANINE--D-ALANINE LIGASE"/>
    <property type="match status" value="1"/>
</dbReference>
<dbReference type="PANTHER" id="PTHR23132:SF25">
    <property type="entry name" value="D-ALANINE--D-ALANINE LIGASE A"/>
    <property type="match status" value="1"/>
</dbReference>
<dbReference type="Pfam" id="PF07478">
    <property type="entry name" value="Dala_Dala_lig_C"/>
    <property type="match status" value="1"/>
</dbReference>
<dbReference type="Pfam" id="PF01820">
    <property type="entry name" value="Dala_Dala_lig_N"/>
    <property type="match status" value="1"/>
</dbReference>
<dbReference type="PIRSF" id="PIRSF039102">
    <property type="entry name" value="Ddl/VanB"/>
    <property type="match status" value="1"/>
</dbReference>
<dbReference type="SUPFAM" id="SSF56059">
    <property type="entry name" value="Glutathione synthetase ATP-binding domain-like"/>
    <property type="match status" value="1"/>
</dbReference>
<dbReference type="SUPFAM" id="SSF52440">
    <property type="entry name" value="PreATP-grasp domain"/>
    <property type="match status" value="1"/>
</dbReference>
<dbReference type="PROSITE" id="PS50975">
    <property type="entry name" value="ATP_GRASP"/>
    <property type="match status" value="1"/>
</dbReference>
<dbReference type="PROSITE" id="PS00843">
    <property type="entry name" value="DALA_DALA_LIGASE_1"/>
    <property type="match status" value="1"/>
</dbReference>
<dbReference type="PROSITE" id="PS00844">
    <property type="entry name" value="DALA_DALA_LIGASE_2"/>
    <property type="match status" value="1"/>
</dbReference>
<evidence type="ECO:0000250" key="1"/>
<evidence type="ECO:0000255" key="2">
    <source>
        <dbReference type="HAMAP-Rule" id="MF_00047"/>
    </source>
</evidence>
<keyword id="KW-0067">ATP-binding</keyword>
<keyword id="KW-0133">Cell shape</keyword>
<keyword id="KW-0961">Cell wall biogenesis/degradation</keyword>
<keyword id="KW-0963">Cytoplasm</keyword>
<keyword id="KW-0436">Ligase</keyword>
<keyword id="KW-0460">Magnesium</keyword>
<keyword id="KW-0464">Manganese</keyword>
<keyword id="KW-0479">Metal-binding</keyword>
<keyword id="KW-0547">Nucleotide-binding</keyword>
<keyword id="KW-0573">Peptidoglycan synthesis</keyword>
<reference key="1">
    <citation type="journal article" date="2007" name="Genome Res.">
        <title>Reductive evolution and niche adaptation inferred from the genome of Mycobacterium ulcerans, the causative agent of Buruli ulcer.</title>
        <authorList>
            <person name="Stinear T.P."/>
            <person name="Seemann T."/>
            <person name="Pidot S."/>
            <person name="Frigui W."/>
            <person name="Reysset G."/>
            <person name="Garnier T."/>
            <person name="Meurice G."/>
            <person name="Simon D."/>
            <person name="Bouchier C."/>
            <person name="Ma L."/>
            <person name="Tichit M."/>
            <person name="Porter J.L."/>
            <person name="Ryan J."/>
            <person name="Johnson P.D.R."/>
            <person name="Davies J.K."/>
            <person name="Jenkin G.A."/>
            <person name="Small P.L.C."/>
            <person name="Jones L.M."/>
            <person name="Tekaia F."/>
            <person name="Laval F."/>
            <person name="Daffe M."/>
            <person name="Parkhill J."/>
            <person name="Cole S.T."/>
        </authorList>
    </citation>
    <scope>NUCLEOTIDE SEQUENCE [LARGE SCALE GENOMIC DNA]</scope>
    <source>
        <strain>Agy99</strain>
    </source>
</reference>